<gene>
    <name evidence="1" type="primary">atpE</name>
    <name type="ordered locus">GDI1179</name>
    <name type="ordered locus">Gdia_1892</name>
</gene>
<sequence length="74" mass="7482">MDIAAAREIGAGIAVIALAGVGIGLGNIFSTLVSSIARNPAARPHVFGLGMLGFALTEAVALYALLIAFLILFV</sequence>
<organism>
    <name type="scientific">Gluconacetobacter diazotrophicus (strain ATCC 49037 / DSM 5601 / CCUG 37298 / CIP 103539 / LMG 7603 / PAl5)</name>
    <dbReference type="NCBI Taxonomy" id="272568"/>
    <lineage>
        <taxon>Bacteria</taxon>
        <taxon>Pseudomonadati</taxon>
        <taxon>Pseudomonadota</taxon>
        <taxon>Alphaproteobacteria</taxon>
        <taxon>Acetobacterales</taxon>
        <taxon>Acetobacteraceae</taxon>
        <taxon>Gluconacetobacter</taxon>
    </lineage>
</organism>
<proteinExistence type="inferred from homology"/>
<protein>
    <recommendedName>
        <fullName evidence="1">ATP synthase subunit c</fullName>
    </recommendedName>
    <alternativeName>
        <fullName evidence="1">ATP synthase F(0) sector subunit c</fullName>
    </alternativeName>
    <alternativeName>
        <fullName evidence="1">F-type ATPase subunit c</fullName>
        <shortName evidence="1">F-ATPase subunit c</shortName>
    </alternativeName>
    <alternativeName>
        <fullName evidence="1">Lipid-binding protein</fullName>
    </alternativeName>
</protein>
<reference key="1">
    <citation type="journal article" date="2009" name="BMC Genomics">
        <title>Complete genome sequence of the sugarcane nitrogen-fixing endophyte Gluconacetobacter diazotrophicus Pal5.</title>
        <authorList>
            <person name="Bertalan M."/>
            <person name="Albano R."/>
            <person name="de Padua V."/>
            <person name="Rouws L."/>
            <person name="Rojas C."/>
            <person name="Hemerly A."/>
            <person name="Teixeira K."/>
            <person name="Schwab S."/>
            <person name="Araujo J."/>
            <person name="Oliveira A."/>
            <person name="Franca L."/>
            <person name="Magalhaes V."/>
            <person name="Alqueres S."/>
            <person name="Cardoso A."/>
            <person name="Almeida W."/>
            <person name="Loureiro M.M."/>
            <person name="Nogueira E."/>
            <person name="Cidade D."/>
            <person name="Oliveira D."/>
            <person name="Simao T."/>
            <person name="Macedo J."/>
            <person name="Valadao A."/>
            <person name="Dreschsel M."/>
            <person name="Freitas F."/>
            <person name="Vidal M."/>
            <person name="Guedes H."/>
            <person name="Rodrigues E."/>
            <person name="Meneses C."/>
            <person name="Brioso P."/>
            <person name="Pozzer L."/>
            <person name="Figueiredo D."/>
            <person name="Montano H."/>
            <person name="Junior J."/>
            <person name="de Souza Filho G."/>
            <person name="Martin Quintana Flores V."/>
            <person name="Ferreira B."/>
            <person name="Branco A."/>
            <person name="Gonzalez P."/>
            <person name="Guillobel H."/>
            <person name="Lemos M."/>
            <person name="Seibel L."/>
            <person name="Macedo J."/>
            <person name="Alves-Ferreira M."/>
            <person name="Sachetto-Martins G."/>
            <person name="Coelho A."/>
            <person name="Santos E."/>
            <person name="Amaral G."/>
            <person name="Neves A."/>
            <person name="Pacheco A.B."/>
            <person name="Carvalho D."/>
            <person name="Lery L."/>
            <person name="Bisch P."/>
            <person name="Rossle S.C."/>
            <person name="Urmenyi T."/>
            <person name="Rael Pereira A."/>
            <person name="Silva R."/>
            <person name="Rondinelli E."/>
            <person name="von Kruger W."/>
            <person name="Martins O."/>
            <person name="Baldani J.I."/>
            <person name="Ferreira P.C."/>
        </authorList>
    </citation>
    <scope>NUCLEOTIDE SEQUENCE [LARGE SCALE GENOMIC DNA]</scope>
    <source>
        <strain>ATCC 49037 / DSM 5601 / CCUG 37298 / CIP 103539 / LMG 7603 / PAl5</strain>
    </source>
</reference>
<reference key="2">
    <citation type="journal article" date="2010" name="Stand. Genomic Sci.">
        <title>Two genome sequences of the same bacterial strain, Gluconacetobacter diazotrophicus PAl 5, suggest a new standard in genome sequence submission.</title>
        <authorList>
            <person name="Giongo A."/>
            <person name="Tyler H.L."/>
            <person name="Zipperer U.N."/>
            <person name="Triplett E.W."/>
        </authorList>
    </citation>
    <scope>NUCLEOTIDE SEQUENCE [LARGE SCALE GENOMIC DNA]</scope>
    <source>
        <strain>ATCC 49037 / DSM 5601 / CCUG 37298 / CIP 103539 / LMG 7603 / PAl5</strain>
    </source>
</reference>
<keyword id="KW-0066">ATP synthesis</keyword>
<keyword id="KW-0997">Cell inner membrane</keyword>
<keyword id="KW-1003">Cell membrane</keyword>
<keyword id="KW-0138">CF(0)</keyword>
<keyword id="KW-0375">Hydrogen ion transport</keyword>
<keyword id="KW-0406">Ion transport</keyword>
<keyword id="KW-0446">Lipid-binding</keyword>
<keyword id="KW-0472">Membrane</keyword>
<keyword id="KW-1185">Reference proteome</keyword>
<keyword id="KW-0812">Transmembrane</keyword>
<keyword id="KW-1133">Transmembrane helix</keyword>
<keyword id="KW-0813">Transport</keyword>
<accession>A9HDM8</accession>
<name>ATPL_GLUDA</name>
<dbReference type="EMBL" id="CP001189">
    <property type="protein sequence ID" value="ACI51652.1"/>
    <property type="molecule type" value="Genomic_DNA"/>
</dbReference>
<dbReference type="EMBL" id="AM889285">
    <property type="protein sequence ID" value="CAP55122.1"/>
    <property type="molecule type" value="Genomic_DNA"/>
</dbReference>
<dbReference type="RefSeq" id="WP_012224283.1">
    <property type="nucleotide sequence ID" value="NC_011365.1"/>
</dbReference>
<dbReference type="SMR" id="A9HDM8"/>
<dbReference type="STRING" id="272568.GDI1179"/>
<dbReference type="KEGG" id="gdi:GDI1179"/>
<dbReference type="KEGG" id="gdj:Gdia_1892"/>
<dbReference type="eggNOG" id="COG0636">
    <property type="taxonomic scope" value="Bacteria"/>
</dbReference>
<dbReference type="HOGENOM" id="CLU_148047_4_1_5"/>
<dbReference type="OrthoDB" id="9811093at2"/>
<dbReference type="Proteomes" id="UP000001176">
    <property type="component" value="Chromosome"/>
</dbReference>
<dbReference type="GO" id="GO:0005886">
    <property type="term" value="C:plasma membrane"/>
    <property type="evidence" value="ECO:0007669"/>
    <property type="project" value="UniProtKB-SubCell"/>
</dbReference>
<dbReference type="GO" id="GO:0045259">
    <property type="term" value="C:proton-transporting ATP synthase complex"/>
    <property type="evidence" value="ECO:0007669"/>
    <property type="project" value="UniProtKB-KW"/>
</dbReference>
<dbReference type="GO" id="GO:0033177">
    <property type="term" value="C:proton-transporting two-sector ATPase complex, proton-transporting domain"/>
    <property type="evidence" value="ECO:0007669"/>
    <property type="project" value="InterPro"/>
</dbReference>
<dbReference type="GO" id="GO:0008289">
    <property type="term" value="F:lipid binding"/>
    <property type="evidence" value="ECO:0007669"/>
    <property type="project" value="UniProtKB-KW"/>
</dbReference>
<dbReference type="GO" id="GO:0046933">
    <property type="term" value="F:proton-transporting ATP synthase activity, rotational mechanism"/>
    <property type="evidence" value="ECO:0007669"/>
    <property type="project" value="UniProtKB-UniRule"/>
</dbReference>
<dbReference type="CDD" id="cd18182">
    <property type="entry name" value="ATP-synt_Fo_c_ATP5G3"/>
    <property type="match status" value="1"/>
</dbReference>
<dbReference type="FunFam" id="1.20.20.10:FF:000008">
    <property type="entry name" value="ATPase subunit 9 homolog"/>
    <property type="match status" value="1"/>
</dbReference>
<dbReference type="Gene3D" id="1.20.20.10">
    <property type="entry name" value="F1F0 ATP synthase subunit C"/>
    <property type="match status" value="1"/>
</dbReference>
<dbReference type="HAMAP" id="MF_01396">
    <property type="entry name" value="ATP_synth_c_bact"/>
    <property type="match status" value="1"/>
</dbReference>
<dbReference type="InterPro" id="IPR000454">
    <property type="entry name" value="ATP_synth_F0_csu"/>
</dbReference>
<dbReference type="InterPro" id="IPR020537">
    <property type="entry name" value="ATP_synth_F0_csu_DDCD_BS"/>
</dbReference>
<dbReference type="InterPro" id="IPR038662">
    <property type="entry name" value="ATP_synth_F0_csu_sf"/>
</dbReference>
<dbReference type="InterPro" id="IPR002379">
    <property type="entry name" value="ATPase_proteolipid_c-like_dom"/>
</dbReference>
<dbReference type="InterPro" id="IPR035921">
    <property type="entry name" value="F/V-ATP_Csub_sf"/>
</dbReference>
<dbReference type="PANTHER" id="PTHR10031">
    <property type="entry name" value="ATP SYNTHASE LIPID-BINDING PROTEIN, MITOCHONDRIAL"/>
    <property type="match status" value="1"/>
</dbReference>
<dbReference type="PANTHER" id="PTHR10031:SF0">
    <property type="entry name" value="ATPASE PROTEIN 9"/>
    <property type="match status" value="1"/>
</dbReference>
<dbReference type="Pfam" id="PF00137">
    <property type="entry name" value="ATP-synt_C"/>
    <property type="match status" value="1"/>
</dbReference>
<dbReference type="PRINTS" id="PR00124">
    <property type="entry name" value="ATPASEC"/>
</dbReference>
<dbReference type="SUPFAM" id="SSF81333">
    <property type="entry name" value="F1F0 ATP synthase subunit C"/>
    <property type="match status" value="1"/>
</dbReference>
<dbReference type="PROSITE" id="PS00605">
    <property type="entry name" value="ATPASE_C"/>
    <property type="match status" value="1"/>
</dbReference>
<feature type="chain" id="PRO_0000365888" description="ATP synthase subunit c">
    <location>
        <begin position="1"/>
        <end position="74"/>
    </location>
</feature>
<feature type="transmembrane region" description="Helical" evidence="1">
    <location>
        <begin position="9"/>
        <end position="29"/>
    </location>
</feature>
<feature type="transmembrane region" description="Helical" evidence="1">
    <location>
        <begin position="54"/>
        <end position="74"/>
    </location>
</feature>
<feature type="site" description="Reversibly protonated during proton transport" evidence="1">
    <location>
        <position position="58"/>
    </location>
</feature>
<comment type="function">
    <text evidence="1">F(1)F(0) ATP synthase produces ATP from ADP in the presence of a proton or sodium gradient. F-type ATPases consist of two structural domains, F(1) containing the extramembraneous catalytic core and F(0) containing the membrane proton channel, linked together by a central stalk and a peripheral stalk. During catalysis, ATP synthesis in the catalytic domain of F(1) is coupled via a rotary mechanism of the central stalk subunits to proton translocation.</text>
</comment>
<comment type="function">
    <text evidence="1">Key component of the F(0) channel; it plays a direct role in translocation across the membrane. A homomeric c-ring of between 10-14 subunits forms the central stalk rotor element with the F(1) delta and epsilon subunits.</text>
</comment>
<comment type="subunit">
    <text evidence="1">F-type ATPases have 2 components, F(1) - the catalytic core - and F(0) - the membrane proton channel. F(1) has five subunits: alpha(3), beta(3), gamma(1), delta(1), epsilon(1). F(0) has three main subunits: a(1), b(2) and c(10-14). The alpha and beta chains form an alternating ring which encloses part of the gamma chain. F(1) is attached to F(0) by a central stalk formed by the gamma and epsilon chains, while a peripheral stalk is formed by the delta and b chains.</text>
</comment>
<comment type="subcellular location">
    <subcellularLocation>
        <location evidence="1">Cell inner membrane</location>
        <topology evidence="1">Multi-pass membrane protein</topology>
    </subcellularLocation>
</comment>
<comment type="similarity">
    <text evidence="1">Belongs to the ATPase C chain family.</text>
</comment>
<evidence type="ECO:0000255" key="1">
    <source>
        <dbReference type="HAMAP-Rule" id="MF_01396"/>
    </source>
</evidence>